<name>RHLB_SHESA</name>
<protein>
    <recommendedName>
        <fullName evidence="1">ATP-dependent RNA helicase RhlB</fullName>
        <ecNumber evidence="1">3.6.4.13</ecNumber>
    </recommendedName>
</protein>
<accession>A0KS84</accession>
<gene>
    <name evidence="1" type="primary">rhlB</name>
    <name type="ordered locus">Shewana3_0410</name>
</gene>
<keyword id="KW-0067">ATP-binding</keyword>
<keyword id="KW-0963">Cytoplasm</keyword>
<keyword id="KW-0347">Helicase</keyword>
<keyword id="KW-0378">Hydrolase</keyword>
<keyword id="KW-0547">Nucleotide-binding</keyword>
<keyword id="KW-0694">RNA-binding</keyword>
<comment type="function">
    <text evidence="1">DEAD-box RNA helicase involved in RNA degradation. Has RNA-dependent ATPase activity and unwinds double-stranded RNA.</text>
</comment>
<comment type="catalytic activity">
    <reaction evidence="1">
        <text>ATP + H2O = ADP + phosphate + H(+)</text>
        <dbReference type="Rhea" id="RHEA:13065"/>
        <dbReference type="ChEBI" id="CHEBI:15377"/>
        <dbReference type="ChEBI" id="CHEBI:15378"/>
        <dbReference type="ChEBI" id="CHEBI:30616"/>
        <dbReference type="ChEBI" id="CHEBI:43474"/>
        <dbReference type="ChEBI" id="CHEBI:456216"/>
        <dbReference type="EC" id="3.6.4.13"/>
    </reaction>
</comment>
<comment type="subunit">
    <text evidence="1">Component of the RNA degradosome, which is a multiprotein complex involved in RNA processing and mRNA degradation.</text>
</comment>
<comment type="subcellular location">
    <subcellularLocation>
        <location evidence="1">Cytoplasm</location>
    </subcellularLocation>
</comment>
<comment type="similarity">
    <text evidence="1">Belongs to the DEAD box helicase family. RhlB subfamily.</text>
</comment>
<evidence type="ECO:0000255" key="1">
    <source>
        <dbReference type="HAMAP-Rule" id="MF_00661"/>
    </source>
</evidence>
<evidence type="ECO:0000256" key="2">
    <source>
        <dbReference type="SAM" id="MobiDB-lite"/>
    </source>
</evidence>
<proteinExistence type="inferred from homology"/>
<sequence length="439" mass="49293">MSQTHLSNQKFADLPLHPEVKQALAENGFEFCTPIQALSLPVLLQSKDIAGQAQTGTGKTMAFLVATFNHLLSTPVPENRQLNQPRAIIMAPTRELAIQIAKDAILLAKHSHLKVGIVYGGESYDVQRKTLDQGVDILIGTTGRIIDYVRQGIINLGGIQAVVLDEADRMFDLGFIKDIRFLFRRMPSADQRLNMLFSATLSMKVQELAYDHMNEPVKVEIAPEEKTSKNIKEEIFYPSQEDKMRLLLTLIEEDWPEKAIVFSNTKHSCENLWSWLEGDGHRVGLLTGDVPQKKRIRILEQFTQGQLDILVATDVAARGLHISDVSHVYNYDLPDDCEDYVHRIGRTGRAGNKGVSVSFACEEYALNLPAIETYINHSIPVSNYDRDALLEDIPPPVKIHRRHPAGARNLRERSGAGRPQGAHRSGGRPPRHDRTRRQP</sequence>
<organism>
    <name type="scientific">Shewanella sp. (strain ANA-3)</name>
    <dbReference type="NCBI Taxonomy" id="94122"/>
    <lineage>
        <taxon>Bacteria</taxon>
        <taxon>Pseudomonadati</taxon>
        <taxon>Pseudomonadota</taxon>
        <taxon>Gammaproteobacteria</taxon>
        <taxon>Alteromonadales</taxon>
        <taxon>Shewanellaceae</taxon>
        <taxon>Shewanella</taxon>
    </lineage>
</organism>
<feature type="chain" id="PRO_1000082866" description="ATP-dependent RNA helicase RhlB">
    <location>
        <begin position="1"/>
        <end position="439"/>
    </location>
</feature>
<feature type="domain" description="Helicase ATP-binding" evidence="1">
    <location>
        <begin position="40"/>
        <end position="219"/>
    </location>
</feature>
<feature type="domain" description="Helicase C-terminal" evidence="1">
    <location>
        <begin position="243"/>
        <end position="390"/>
    </location>
</feature>
<feature type="region of interest" description="Disordered" evidence="2">
    <location>
        <begin position="395"/>
        <end position="439"/>
    </location>
</feature>
<feature type="short sequence motif" description="Q motif">
    <location>
        <begin position="9"/>
        <end position="37"/>
    </location>
</feature>
<feature type="short sequence motif" description="DEAD box">
    <location>
        <begin position="165"/>
        <end position="168"/>
    </location>
</feature>
<feature type="compositionally biased region" description="Basic residues" evidence="2">
    <location>
        <begin position="425"/>
        <end position="439"/>
    </location>
</feature>
<feature type="binding site" evidence="1">
    <location>
        <begin position="53"/>
        <end position="60"/>
    </location>
    <ligand>
        <name>ATP</name>
        <dbReference type="ChEBI" id="CHEBI:30616"/>
    </ligand>
</feature>
<dbReference type="EC" id="3.6.4.13" evidence="1"/>
<dbReference type="EMBL" id="CP000469">
    <property type="protein sequence ID" value="ABK46653.1"/>
    <property type="molecule type" value="Genomic_DNA"/>
</dbReference>
<dbReference type="RefSeq" id="WP_011715625.1">
    <property type="nucleotide sequence ID" value="NC_008577.1"/>
</dbReference>
<dbReference type="SMR" id="A0KS84"/>
<dbReference type="STRING" id="94122.Shewana3_0410"/>
<dbReference type="KEGG" id="shn:Shewana3_0410"/>
<dbReference type="eggNOG" id="COG0513">
    <property type="taxonomic scope" value="Bacteria"/>
</dbReference>
<dbReference type="HOGENOM" id="CLU_003041_1_3_6"/>
<dbReference type="OrthoDB" id="9805696at2"/>
<dbReference type="Proteomes" id="UP000002589">
    <property type="component" value="Chromosome"/>
</dbReference>
<dbReference type="GO" id="GO:0005829">
    <property type="term" value="C:cytosol"/>
    <property type="evidence" value="ECO:0007669"/>
    <property type="project" value="TreeGrafter"/>
</dbReference>
<dbReference type="GO" id="GO:0005524">
    <property type="term" value="F:ATP binding"/>
    <property type="evidence" value="ECO:0007669"/>
    <property type="project" value="UniProtKB-UniRule"/>
</dbReference>
<dbReference type="GO" id="GO:0016887">
    <property type="term" value="F:ATP hydrolysis activity"/>
    <property type="evidence" value="ECO:0007669"/>
    <property type="project" value="RHEA"/>
</dbReference>
<dbReference type="GO" id="GO:0003723">
    <property type="term" value="F:RNA binding"/>
    <property type="evidence" value="ECO:0007669"/>
    <property type="project" value="UniProtKB-UniRule"/>
</dbReference>
<dbReference type="GO" id="GO:0003724">
    <property type="term" value="F:RNA helicase activity"/>
    <property type="evidence" value="ECO:0007669"/>
    <property type="project" value="UniProtKB-UniRule"/>
</dbReference>
<dbReference type="GO" id="GO:0006401">
    <property type="term" value="P:RNA catabolic process"/>
    <property type="evidence" value="ECO:0007669"/>
    <property type="project" value="UniProtKB-UniRule"/>
</dbReference>
<dbReference type="CDD" id="cd00268">
    <property type="entry name" value="DEADc"/>
    <property type="match status" value="1"/>
</dbReference>
<dbReference type="CDD" id="cd18787">
    <property type="entry name" value="SF2_C_DEAD"/>
    <property type="match status" value="1"/>
</dbReference>
<dbReference type="FunFam" id="3.40.50.300:FF:000008">
    <property type="entry name" value="ATP-dependent RNA helicase RhlB"/>
    <property type="match status" value="1"/>
</dbReference>
<dbReference type="FunFam" id="3.40.50.300:FF:000312">
    <property type="entry name" value="ATP-dependent RNA helicase RhlB"/>
    <property type="match status" value="1"/>
</dbReference>
<dbReference type="Gene3D" id="3.40.50.300">
    <property type="entry name" value="P-loop containing nucleotide triphosphate hydrolases"/>
    <property type="match status" value="2"/>
</dbReference>
<dbReference type="HAMAP" id="MF_00661">
    <property type="entry name" value="DEAD_helicase_RhlB"/>
    <property type="match status" value="1"/>
</dbReference>
<dbReference type="InterPro" id="IPR011545">
    <property type="entry name" value="DEAD/DEAH_box_helicase_dom"/>
</dbReference>
<dbReference type="InterPro" id="IPR050079">
    <property type="entry name" value="DEAD_box_RNA_helicase"/>
</dbReference>
<dbReference type="InterPro" id="IPR014001">
    <property type="entry name" value="Helicase_ATP-bd"/>
</dbReference>
<dbReference type="InterPro" id="IPR001650">
    <property type="entry name" value="Helicase_C-like"/>
</dbReference>
<dbReference type="InterPro" id="IPR027417">
    <property type="entry name" value="P-loop_NTPase"/>
</dbReference>
<dbReference type="InterPro" id="IPR000629">
    <property type="entry name" value="RNA-helicase_DEAD-box_CS"/>
</dbReference>
<dbReference type="InterPro" id="IPR023554">
    <property type="entry name" value="RNA_helicase_ATP-dep_RhlB"/>
</dbReference>
<dbReference type="InterPro" id="IPR014014">
    <property type="entry name" value="RNA_helicase_DEAD_Q_motif"/>
</dbReference>
<dbReference type="NCBIfam" id="NF003419">
    <property type="entry name" value="PRK04837.1"/>
    <property type="match status" value="1"/>
</dbReference>
<dbReference type="PANTHER" id="PTHR47959:SF10">
    <property type="entry name" value="ATP-DEPENDENT RNA HELICASE RHLB"/>
    <property type="match status" value="1"/>
</dbReference>
<dbReference type="PANTHER" id="PTHR47959">
    <property type="entry name" value="ATP-DEPENDENT RNA HELICASE RHLE-RELATED"/>
    <property type="match status" value="1"/>
</dbReference>
<dbReference type="Pfam" id="PF00270">
    <property type="entry name" value="DEAD"/>
    <property type="match status" value="1"/>
</dbReference>
<dbReference type="Pfam" id="PF00271">
    <property type="entry name" value="Helicase_C"/>
    <property type="match status" value="1"/>
</dbReference>
<dbReference type="SMART" id="SM00487">
    <property type="entry name" value="DEXDc"/>
    <property type="match status" value="1"/>
</dbReference>
<dbReference type="SMART" id="SM00490">
    <property type="entry name" value="HELICc"/>
    <property type="match status" value="1"/>
</dbReference>
<dbReference type="SUPFAM" id="SSF52540">
    <property type="entry name" value="P-loop containing nucleoside triphosphate hydrolases"/>
    <property type="match status" value="1"/>
</dbReference>
<dbReference type="PROSITE" id="PS00039">
    <property type="entry name" value="DEAD_ATP_HELICASE"/>
    <property type="match status" value="1"/>
</dbReference>
<dbReference type="PROSITE" id="PS51192">
    <property type="entry name" value="HELICASE_ATP_BIND_1"/>
    <property type="match status" value="1"/>
</dbReference>
<dbReference type="PROSITE" id="PS51194">
    <property type="entry name" value="HELICASE_CTER"/>
    <property type="match status" value="1"/>
</dbReference>
<dbReference type="PROSITE" id="PS51195">
    <property type="entry name" value="Q_MOTIF"/>
    <property type="match status" value="1"/>
</dbReference>
<reference key="1">
    <citation type="submission" date="2006-09" db="EMBL/GenBank/DDBJ databases">
        <title>Complete sequence of chromosome 1 of Shewanella sp. ANA-3.</title>
        <authorList>
            <person name="Copeland A."/>
            <person name="Lucas S."/>
            <person name="Lapidus A."/>
            <person name="Barry K."/>
            <person name="Detter J.C."/>
            <person name="Glavina del Rio T."/>
            <person name="Hammon N."/>
            <person name="Israni S."/>
            <person name="Dalin E."/>
            <person name="Tice H."/>
            <person name="Pitluck S."/>
            <person name="Chertkov O."/>
            <person name="Brettin T."/>
            <person name="Bruce D."/>
            <person name="Han C."/>
            <person name="Tapia R."/>
            <person name="Gilna P."/>
            <person name="Schmutz J."/>
            <person name="Larimer F."/>
            <person name="Land M."/>
            <person name="Hauser L."/>
            <person name="Kyrpides N."/>
            <person name="Kim E."/>
            <person name="Newman D."/>
            <person name="Salticov C."/>
            <person name="Konstantinidis K."/>
            <person name="Klappenback J."/>
            <person name="Tiedje J."/>
            <person name="Richardson P."/>
        </authorList>
    </citation>
    <scope>NUCLEOTIDE SEQUENCE [LARGE SCALE GENOMIC DNA]</scope>
    <source>
        <strain>ANA-3</strain>
    </source>
</reference>